<proteinExistence type="evidence at protein level"/>
<name>IKIP_HUMAN</name>
<keyword id="KW-0025">Alternative splicing</keyword>
<keyword id="KW-0175">Coiled coil</keyword>
<keyword id="KW-0256">Endoplasmic reticulum</keyword>
<keyword id="KW-0325">Glycoprotein</keyword>
<keyword id="KW-0472">Membrane</keyword>
<keyword id="KW-1267">Proteomics identification</keyword>
<keyword id="KW-1185">Reference proteome</keyword>
<keyword id="KW-0812">Transmembrane</keyword>
<keyword id="KW-1133">Transmembrane helix</keyword>
<protein>
    <recommendedName>
        <fullName>Inhibitor of nuclear factor kappa-B kinase-interacting protein</fullName>
        <shortName>I kappa-B kinase-interacting protein</shortName>
        <shortName>IKBKB-interacting protein</shortName>
        <shortName>IKK-interacting protein</shortName>
    </recommendedName>
</protein>
<feature type="chain" id="PRO_0000342261" description="Inhibitor of nuclear factor kappa-B kinase-interacting protein">
    <location>
        <begin position="1"/>
        <end position="350"/>
    </location>
</feature>
<feature type="transmembrane region" description="Helical" evidence="1">
    <location>
        <begin position="46"/>
        <end position="62"/>
    </location>
</feature>
<feature type="region of interest" description="Disordered" evidence="2">
    <location>
        <begin position="1"/>
        <end position="39"/>
    </location>
</feature>
<feature type="coiled-coil region" evidence="1">
    <location>
        <begin position="184"/>
        <end position="217"/>
    </location>
</feature>
<feature type="compositionally biased region" description="Basic residues" evidence="2">
    <location>
        <begin position="1"/>
        <end position="11"/>
    </location>
</feature>
<feature type="glycosylation site" description="N-linked (GlcNAc...) asparagine" evidence="4">
    <location>
        <position position="144"/>
    </location>
</feature>
<feature type="glycosylation site" description="N-linked (GlcNAc...) asparagine" evidence="4">
    <location>
        <position position="328"/>
    </location>
</feature>
<feature type="splice variant" id="VSP_034407" description="In isoform 2." evidence="5 6">
    <location>
        <begin position="1"/>
        <end position="106"/>
    </location>
</feature>
<feature type="splice variant" id="VSP_034408" description="In isoform 3." evidence="6 7">
    <original>WFVFQQSEKFA</original>
    <variation>CGRNLKLSWNN</variation>
    <location>
        <begin position="60"/>
        <end position="70"/>
    </location>
</feature>
<feature type="splice variant" id="VSP_034409" description="In isoform 3." evidence="6 7">
    <location>
        <begin position="71"/>
        <end position="350"/>
    </location>
</feature>
<feature type="splice variant" id="VSP_034410" description="In isoform 4." evidence="5 6 7">
    <original>WQKSEAIMEQLKSFQIIAHLKRLQEEINEVKTWSNRITEKQDILNNSLTTLSQDITKVDQSTTSMAKDVGLKITSVKTDIRRISGLVTDVISLTDSVQELENKIEKVEKNTVKNIGDLLSSSIDRTATLRKTASENSQRINSVKKTLTELKSDFDKHTDRFLSLEGDRAKVLKTVTFANDLKPKVYNLKKDFSRLEPLVNDLTLRIGRLVTDLLQREKEIAFLSEKISNLTIVQAEIKDIKDEIAHISDMN</original>
    <variation>LESTESILQEATSSMSLMTQFEQEVSNLQDIMHDIQNNEEVLTQRMQSLNEKFQNITDFWKRSLEEMNINTDIFKSEAKHIHSQVTVQINSAEQEIKLLTERLKDLEDSTLRNIRTVKRQEEEDLLRVEEQLGSDTKAIEKLEEEQHALFARDEDLTNKLSDYEPKVEECKTHLPTIESAIHSVLRVSQDLIETEKKMEDLTMQMFNMEDDMLKAVSEIMEMQKTLEGIQYDNSILKMQNELDILKEKVHDFIAYSSTGEKGTLKEYNIENKGIGGDF</variation>
    <location>
        <begin position="100"/>
        <end position="350"/>
    </location>
</feature>
<feature type="sequence variant" id="VAR_051067" description="In dbSNP:rs1048906.">
    <original>G</original>
    <variation>S</variation>
    <location>
        <position position="265"/>
    </location>
</feature>
<feature type="sequence variant" id="VAR_082882" description="In dbSNP:rs12322444." evidence="8">
    <original>Q</original>
    <variation>H</variation>
    <location sequence="Q70UQ0-4">
        <position position="122"/>
    </location>
</feature>
<sequence length="350" mass="39309">MSEVKSRKKSGPKGAPAAEPGKRSEGGKTPVARSSGGGGWADPRTCLSLLSLGTCLGLAWFVFQQSEKFAKVENQYQLLKLETNEFQQLQSKISLISEKWQKSEAIMEQLKSFQIIAHLKRLQEEINEVKTWSNRITEKQDILNNSLTTLSQDITKVDQSTTSMAKDVGLKITSVKTDIRRISGLVTDVISLTDSVQELENKIEKVEKNTVKNIGDLLSSSIDRTATLRKTASENSQRINSVKKTLTELKSDFDKHTDRFLSLEGDRAKVLKTVTFANDLKPKVYNLKKDFSRLEPLVNDLTLRIGRLVTDLLQREKEIAFLSEKISNLTIVQAEIKDIKDEIAHISDMN</sequence>
<gene>
    <name type="primary">IKBIP</name>
    <name type="synonym">IKIP</name>
</gene>
<accession>Q70UQ0</accession>
<accession>Q6ZWH4</accession>
<accession>Q70UP9</accession>
<accession>Q86V91</accession>
<accession>Q96ND2</accession>
<reference key="1">
    <citation type="journal article" date="2004" name="Cell Death Differ.">
        <title>A highly conserved proapoptotic gene, IKIP, located next to the APAF1 gene locus, is regulated by p53.</title>
        <authorList>
            <person name="Hofer-Warbinek R."/>
            <person name="Schmid J.A."/>
            <person name="Mayer H."/>
            <person name="Winsauer G."/>
            <person name="Orel L."/>
            <person name="Mueller B."/>
            <person name="Wiesner C."/>
            <person name="Binder B.R."/>
            <person name="de Martin R."/>
        </authorList>
    </citation>
    <scope>NUCLEOTIDE SEQUENCE [MRNA] (ISOFORMS 1; 2; 3 AND 4)</scope>
    <scope>INDUCTION</scope>
    <scope>TISSUE SPECIFICITY</scope>
    <scope>SUBCELLULAR LOCATION</scope>
    <scope>GLYCOSYLATION</scope>
    <scope>FUNCTION</scope>
</reference>
<reference key="2">
    <citation type="journal article" date="2004" name="Nat. Genet.">
        <title>Complete sequencing and characterization of 21,243 full-length human cDNAs.</title>
        <authorList>
            <person name="Ota T."/>
            <person name="Suzuki Y."/>
            <person name="Nishikawa T."/>
            <person name="Otsuki T."/>
            <person name="Sugiyama T."/>
            <person name="Irie R."/>
            <person name="Wakamatsu A."/>
            <person name="Hayashi K."/>
            <person name="Sato H."/>
            <person name="Nagai K."/>
            <person name="Kimura K."/>
            <person name="Makita H."/>
            <person name="Sekine M."/>
            <person name="Obayashi M."/>
            <person name="Nishi T."/>
            <person name="Shibahara T."/>
            <person name="Tanaka T."/>
            <person name="Ishii S."/>
            <person name="Yamamoto J."/>
            <person name="Saito K."/>
            <person name="Kawai Y."/>
            <person name="Isono Y."/>
            <person name="Nakamura Y."/>
            <person name="Nagahari K."/>
            <person name="Murakami K."/>
            <person name="Yasuda T."/>
            <person name="Iwayanagi T."/>
            <person name="Wagatsuma M."/>
            <person name="Shiratori A."/>
            <person name="Sudo H."/>
            <person name="Hosoiri T."/>
            <person name="Kaku Y."/>
            <person name="Kodaira H."/>
            <person name="Kondo H."/>
            <person name="Sugawara M."/>
            <person name="Takahashi M."/>
            <person name="Kanda K."/>
            <person name="Yokoi T."/>
            <person name="Furuya T."/>
            <person name="Kikkawa E."/>
            <person name="Omura Y."/>
            <person name="Abe K."/>
            <person name="Kamihara K."/>
            <person name="Katsuta N."/>
            <person name="Sato K."/>
            <person name="Tanikawa M."/>
            <person name="Yamazaki M."/>
            <person name="Ninomiya K."/>
            <person name="Ishibashi T."/>
            <person name="Yamashita H."/>
            <person name="Murakawa K."/>
            <person name="Fujimori K."/>
            <person name="Tanai H."/>
            <person name="Kimata M."/>
            <person name="Watanabe M."/>
            <person name="Hiraoka S."/>
            <person name="Chiba Y."/>
            <person name="Ishida S."/>
            <person name="Ono Y."/>
            <person name="Takiguchi S."/>
            <person name="Watanabe S."/>
            <person name="Yosida M."/>
            <person name="Hotuta T."/>
            <person name="Kusano J."/>
            <person name="Kanehori K."/>
            <person name="Takahashi-Fujii A."/>
            <person name="Hara H."/>
            <person name="Tanase T.-O."/>
            <person name="Nomura Y."/>
            <person name="Togiya S."/>
            <person name="Komai F."/>
            <person name="Hara R."/>
            <person name="Takeuchi K."/>
            <person name="Arita M."/>
            <person name="Imose N."/>
            <person name="Musashino K."/>
            <person name="Yuuki H."/>
            <person name="Oshima A."/>
            <person name="Sasaki N."/>
            <person name="Aotsuka S."/>
            <person name="Yoshikawa Y."/>
            <person name="Matsunawa H."/>
            <person name="Ichihara T."/>
            <person name="Shiohata N."/>
            <person name="Sano S."/>
            <person name="Moriya S."/>
            <person name="Momiyama H."/>
            <person name="Satoh N."/>
            <person name="Takami S."/>
            <person name="Terashima Y."/>
            <person name="Suzuki O."/>
            <person name="Nakagawa S."/>
            <person name="Senoh A."/>
            <person name="Mizoguchi H."/>
            <person name="Goto Y."/>
            <person name="Shimizu F."/>
            <person name="Wakebe H."/>
            <person name="Hishigaki H."/>
            <person name="Watanabe T."/>
            <person name="Sugiyama A."/>
            <person name="Takemoto M."/>
            <person name="Kawakami B."/>
            <person name="Yamazaki M."/>
            <person name="Watanabe K."/>
            <person name="Kumagai A."/>
            <person name="Itakura S."/>
            <person name="Fukuzumi Y."/>
            <person name="Fujimori Y."/>
            <person name="Komiyama M."/>
            <person name="Tashiro H."/>
            <person name="Tanigami A."/>
            <person name="Fujiwara T."/>
            <person name="Ono T."/>
            <person name="Yamada K."/>
            <person name="Fujii Y."/>
            <person name="Ozaki K."/>
            <person name="Hirao M."/>
            <person name="Ohmori Y."/>
            <person name="Kawabata A."/>
            <person name="Hikiji T."/>
            <person name="Kobatake N."/>
            <person name="Inagaki H."/>
            <person name="Ikema Y."/>
            <person name="Okamoto S."/>
            <person name="Okitani R."/>
            <person name="Kawakami T."/>
            <person name="Noguchi S."/>
            <person name="Itoh T."/>
            <person name="Shigeta K."/>
            <person name="Senba T."/>
            <person name="Matsumura K."/>
            <person name="Nakajima Y."/>
            <person name="Mizuno T."/>
            <person name="Morinaga M."/>
            <person name="Sasaki M."/>
            <person name="Togashi T."/>
            <person name="Oyama M."/>
            <person name="Hata H."/>
            <person name="Watanabe M."/>
            <person name="Komatsu T."/>
            <person name="Mizushima-Sugano J."/>
            <person name="Satoh T."/>
            <person name="Shirai Y."/>
            <person name="Takahashi Y."/>
            <person name="Nakagawa K."/>
            <person name="Okumura K."/>
            <person name="Nagase T."/>
            <person name="Nomura N."/>
            <person name="Kikuchi H."/>
            <person name="Masuho Y."/>
            <person name="Yamashita R."/>
            <person name="Nakai K."/>
            <person name="Yada T."/>
            <person name="Nakamura Y."/>
            <person name="Ohara O."/>
            <person name="Isogai T."/>
            <person name="Sugano S."/>
        </authorList>
    </citation>
    <scope>NUCLEOTIDE SEQUENCE [LARGE SCALE MRNA] (ISOFORMS 2 AND 4)</scope>
</reference>
<reference key="3">
    <citation type="submission" date="2005-07" db="EMBL/GenBank/DDBJ databases">
        <authorList>
            <person name="Mural R.J."/>
            <person name="Istrail S."/>
            <person name="Sutton G.G."/>
            <person name="Florea L."/>
            <person name="Halpern A.L."/>
            <person name="Mobarry C.M."/>
            <person name="Lippert R."/>
            <person name="Walenz B."/>
            <person name="Shatkay H."/>
            <person name="Dew I."/>
            <person name="Miller J.R."/>
            <person name="Flanigan M.J."/>
            <person name="Edwards N.J."/>
            <person name="Bolanos R."/>
            <person name="Fasulo D."/>
            <person name="Halldorsson B.V."/>
            <person name="Hannenhalli S."/>
            <person name="Turner R."/>
            <person name="Yooseph S."/>
            <person name="Lu F."/>
            <person name="Nusskern D.R."/>
            <person name="Shue B.C."/>
            <person name="Zheng X.H."/>
            <person name="Zhong F."/>
            <person name="Delcher A.L."/>
            <person name="Huson D.H."/>
            <person name="Kravitz S.A."/>
            <person name="Mouchard L."/>
            <person name="Reinert K."/>
            <person name="Remington K.A."/>
            <person name="Clark A.G."/>
            <person name="Waterman M.S."/>
            <person name="Eichler E.E."/>
            <person name="Adams M.D."/>
            <person name="Hunkapiller M.W."/>
            <person name="Myers E.W."/>
            <person name="Venter J.C."/>
        </authorList>
    </citation>
    <scope>NUCLEOTIDE SEQUENCE [LARGE SCALE GENOMIC DNA]</scope>
</reference>
<reference key="4">
    <citation type="journal article" date="2004" name="Genome Res.">
        <title>The status, quality, and expansion of the NIH full-length cDNA project: the Mammalian Gene Collection (MGC).</title>
        <authorList>
            <consortium name="The MGC Project Team"/>
        </authorList>
    </citation>
    <scope>NUCLEOTIDE SEQUENCE [LARGE SCALE MRNA] (ISOFORMS 3 AND 4)</scope>
    <source>
        <tissue>Prostate</tissue>
        <tissue>Skin</tissue>
        <tissue>Testis</tissue>
    </source>
</reference>
<reference key="5">
    <citation type="journal article" date="2009" name="J. Proteome Res.">
        <title>Glycoproteomics analysis of human liver tissue by combination of multiple enzyme digestion and hydrazide chemistry.</title>
        <authorList>
            <person name="Chen R."/>
            <person name="Jiang X."/>
            <person name="Sun D."/>
            <person name="Han G."/>
            <person name="Wang F."/>
            <person name="Ye M."/>
            <person name="Wang L."/>
            <person name="Zou H."/>
        </authorList>
    </citation>
    <scope>GLYCOSYLATION [LARGE SCALE ANALYSIS] AT ASN-144 AND ASN-328</scope>
    <source>
        <tissue>Liver</tissue>
    </source>
</reference>
<reference key="6">
    <citation type="journal article" date="2011" name="BMC Syst. Biol.">
        <title>Initial characterization of the human central proteome.</title>
        <authorList>
            <person name="Burkard T.R."/>
            <person name="Planyavsky M."/>
            <person name="Kaupe I."/>
            <person name="Breitwieser F.P."/>
            <person name="Buerckstuemmer T."/>
            <person name="Bennett K.L."/>
            <person name="Superti-Furga G."/>
            <person name="Colinge J."/>
        </authorList>
    </citation>
    <scope>IDENTIFICATION BY MASS SPECTROMETRY [LARGE SCALE ANALYSIS]</scope>
</reference>
<reference key="7">
    <citation type="journal article" date="2015" name="Proteomics">
        <title>N-terminome analysis of the human mitochondrial proteome.</title>
        <authorList>
            <person name="Vaca Jacome A.S."/>
            <person name="Rabilloud T."/>
            <person name="Schaeffer-Reiss C."/>
            <person name="Rompais M."/>
            <person name="Ayoub D."/>
            <person name="Lane L."/>
            <person name="Bairoch A."/>
            <person name="Van Dorsselaer A."/>
            <person name="Carapito C."/>
        </authorList>
    </citation>
    <scope>IDENTIFICATION BY MASS SPECTROMETRY [LARGE SCALE ANALYSIS]</scope>
</reference>
<evidence type="ECO:0000255" key="1"/>
<evidence type="ECO:0000256" key="2">
    <source>
        <dbReference type="SAM" id="MobiDB-lite"/>
    </source>
</evidence>
<evidence type="ECO:0000269" key="3">
    <source>
    </source>
</evidence>
<evidence type="ECO:0000269" key="4">
    <source>
    </source>
</evidence>
<evidence type="ECO:0000303" key="5">
    <source>
    </source>
</evidence>
<evidence type="ECO:0000303" key="6">
    <source>
    </source>
</evidence>
<evidence type="ECO:0000303" key="7">
    <source>
    </source>
</evidence>
<evidence type="ECO:0000305" key="8"/>
<comment type="function">
    <text evidence="3">Target of p53/TP53 with pro-apoptotic function.</text>
</comment>
<comment type="interaction">
    <interactant intactId="EBI-2557212">
        <id>Q70UQ0</id>
    </interactant>
    <interactant intactId="EBI-752084">
        <id>Q9BUW7</id>
        <label>BBLN</label>
    </interactant>
    <organismsDiffer>false</organismsDiffer>
    <experiments>3</experiments>
</comment>
<comment type="interaction">
    <interactant intactId="EBI-2557212">
        <id>Q70UQ0</id>
    </interactant>
    <interactant intactId="EBI-739566">
        <id>P19012</id>
        <label>KRT15</label>
    </interactant>
    <organismsDiffer>false</organismsDiffer>
    <experiments>3</experiments>
</comment>
<comment type="interaction">
    <interactant intactId="EBI-2557212">
        <id>Q70UQ0</id>
    </interactant>
    <interactant intactId="EBI-3906629">
        <id>P15173</id>
        <label>MYOG</label>
    </interactant>
    <organismsDiffer>false</organismsDiffer>
    <experiments>4</experiments>
</comment>
<comment type="interaction">
    <interactant intactId="EBI-2557212">
        <id>Q70UQ0</id>
    </interactant>
    <interactant intactId="EBI-7445625">
        <id>Q9HC29</id>
        <label>NOD2</label>
    </interactant>
    <organismsDiffer>false</organismsDiffer>
    <experiments>4</experiments>
</comment>
<comment type="interaction">
    <interactant intactId="EBI-2557212">
        <id>Q70UQ0</id>
    </interactant>
    <interactant intactId="EBI-347978">
        <id>P37198</id>
        <label>NUP62</label>
    </interactant>
    <organismsDiffer>false</organismsDiffer>
    <experiments>3</experiments>
</comment>
<comment type="interaction">
    <interactant intactId="EBI-2557212">
        <id>Q70UQ0</id>
    </interactant>
    <interactant intactId="EBI-1105213">
        <id>Q9UBB9</id>
        <label>TFIP11</label>
    </interactant>
    <organismsDiffer>false</organismsDiffer>
    <experiments>3</experiments>
</comment>
<comment type="interaction">
    <interactant intactId="EBI-2557212">
        <id>Q70UQ0</id>
    </interactant>
    <interactant intactId="EBI-10184033">
        <id>Q5VU62</id>
        <label>TPM3</label>
    </interactant>
    <organismsDiffer>false</organismsDiffer>
    <experiments>3</experiments>
</comment>
<comment type="interaction">
    <interactant intactId="EBI-12190633">
        <id>Q70UQ0-4</id>
    </interactant>
    <interactant intactId="EBI-7247651">
        <id>Q96MX0</id>
        <label>CMTM3</label>
    </interactant>
    <organismsDiffer>false</organismsDiffer>
    <experiments>3</experiments>
</comment>
<comment type="interaction">
    <interactant intactId="EBI-12190633">
        <id>Q70UQ0-4</id>
    </interactant>
    <interactant intactId="EBI-10178951">
        <id>O00155</id>
        <label>GPR25</label>
    </interactant>
    <organismsDiffer>false</organismsDiffer>
    <experiments>3</experiments>
</comment>
<comment type="interaction">
    <interactant intactId="EBI-12190633">
        <id>Q70UQ0-4</id>
    </interactant>
    <interactant intactId="EBI-8473670">
        <id>O95447</id>
        <label>LCA5L</label>
    </interactant>
    <organismsDiffer>false</organismsDiffer>
    <experiments>3</experiments>
</comment>
<comment type="interaction">
    <interactant intactId="EBI-12190633">
        <id>Q70UQ0-4</id>
    </interactant>
    <interactant intactId="EBI-3906629">
        <id>P15173</id>
        <label>MYOG</label>
    </interactant>
    <organismsDiffer>false</organismsDiffer>
    <experiments>4</experiments>
</comment>
<comment type="interaction">
    <interactant intactId="EBI-12190633">
        <id>Q70UQ0-4</id>
    </interactant>
    <interactant intactId="EBI-358489">
        <id>Q96GM5</id>
        <label>SMARCD1</label>
    </interactant>
    <organismsDiffer>false</organismsDiffer>
    <experiments>3</experiments>
</comment>
<comment type="interaction">
    <interactant intactId="EBI-12190633">
        <id>Q70UQ0-4</id>
    </interactant>
    <interactant intactId="EBI-296723">
        <id>O95295</id>
        <label>SNAPIN</label>
    </interactant>
    <organismsDiffer>false</organismsDiffer>
    <experiments>4</experiments>
</comment>
<comment type="interaction">
    <interactant intactId="EBI-12190633">
        <id>Q70UQ0-4</id>
    </interactant>
    <interactant intactId="EBI-712969">
        <id>Q9Y3C0</id>
        <label>WASHC3</label>
    </interactant>
    <organismsDiffer>false</organismsDiffer>
    <experiments>4</experiments>
</comment>
<comment type="subcellular location">
    <subcellularLocation>
        <location evidence="3">Endoplasmic reticulum membrane</location>
        <topology evidence="3">Single-pass membrane protein</topology>
    </subcellularLocation>
    <text>Isoform 4 deletion of the hydrophobic, or transmembrane region between AA 45-63 results in uniform distribution throughout the cell, suggesting that this region is responsible for endoplasmic reticulum localization.</text>
</comment>
<comment type="alternative products">
    <event type="alternative splicing"/>
    <isoform>
        <id>Q70UQ0-1</id>
        <name>1</name>
        <name>IKIP2</name>
        <sequence type="displayed"/>
    </isoform>
    <isoform>
        <id>Q70UQ0-2</id>
        <name>2</name>
        <sequence type="described" ref="VSP_034407"/>
    </isoform>
    <isoform>
        <id>Q70UQ0-3</id>
        <name>3</name>
        <name>IKIP3</name>
        <sequence type="described" ref="VSP_034408 VSP_034409"/>
    </isoform>
    <isoform>
        <id>Q70UQ0-4</id>
        <name>4</name>
        <name>IKIP1</name>
        <sequence type="described" ref="VSP_034410"/>
    </isoform>
</comment>
<comment type="tissue specificity">
    <text evidence="3">Expressed in vein endothelial cells. Isoform 4 is expressed in lung, kidney, spleen, thymus and skeletal muscle.</text>
</comment>
<comment type="induction">
    <text evidence="3">By X-ray irradiation.</text>
</comment>
<comment type="PTM">
    <text evidence="3 4">N-glycosylated. Isoform 4 is glycosylated at Asn-154.</text>
</comment>
<comment type="miscellaneous">
    <text>Shares a common promoter with APAF1 from which the 2 genes are transcribed in opposite directions.</text>
</comment>
<dbReference type="EMBL" id="AJ539425">
    <property type="protein sequence ID" value="CAD62380.1"/>
    <property type="molecule type" value="mRNA"/>
</dbReference>
<dbReference type="EMBL" id="AJ539426">
    <property type="protein sequence ID" value="CAD62381.1"/>
    <property type="molecule type" value="mRNA"/>
</dbReference>
<dbReference type="EMBL" id="AJ539427">
    <property type="protein sequence ID" value="CAD62382.1"/>
    <property type="molecule type" value="mRNA"/>
</dbReference>
<dbReference type="EMBL" id="AJ539427">
    <property type="protein sequence ID" value="CAD62383.1"/>
    <property type="molecule type" value="mRNA"/>
</dbReference>
<dbReference type="EMBL" id="AK055613">
    <property type="protein sequence ID" value="BAB70970.1"/>
    <property type="molecule type" value="mRNA"/>
</dbReference>
<dbReference type="EMBL" id="AK123069">
    <property type="protein sequence ID" value="BAC85528.1"/>
    <property type="molecule type" value="mRNA"/>
</dbReference>
<dbReference type="EMBL" id="CH471054">
    <property type="protein sequence ID" value="EAW97601.1"/>
    <property type="molecule type" value="Genomic_DNA"/>
</dbReference>
<dbReference type="EMBL" id="BC029415">
    <property type="protein sequence ID" value="AAH29415.2"/>
    <property type="molecule type" value="mRNA"/>
</dbReference>
<dbReference type="EMBL" id="BC051372">
    <property type="protein sequence ID" value="AAH51372.2"/>
    <property type="molecule type" value="mRNA"/>
</dbReference>
<dbReference type="EMBL" id="BC058933">
    <property type="protein sequence ID" value="AAH58933.1"/>
    <property type="molecule type" value="mRNA"/>
</dbReference>
<dbReference type="CCDS" id="CCDS41822.1">
    <molecule id="Q70UQ0-3"/>
</dbReference>
<dbReference type="CCDS" id="CCDS9067.1">
    <molecule id="Q70UQ0-1"/>
</dbReference>
<dbReference type="CCDS" id="CCDS9068.1">
    <molecule id="Q70UQ0-4"/>
</dbReference>
<dbReference type="RefSeq" id="NP_710154.1">
    <molecule id="Q70UQ0-4"/>
    <property type="nucleotide sequence ID" value="NM_153687.4"/>
</dbReference>
<dbReference type="RefSeq" id="NP_963906.1">
    <molecule id="Q70UQ0-1"/>
    <property type="nucleotide sequence ID" value="NM_201612.4"/>
</dbReference>
<dbReference type="RefSeq" id="NP_963907.1">
    <molecule id="Q70UQ0-3"/>
    <property type="nucleotide sequence ID" value="NM_201613.4"/>
</dbReference>
<dbReference type="SMR" id="Q70UQ0"/>
<dbReference type="BioGRID" id="125730">
    <property type="interactions" value="190"/>
</dbReference>
<dbReference type="FunCoup" id="Q70UQ0">
    <property type="interactions" value="1122"/>
</dbReference>
<dbReference type="IntAct" id="Q70UQ0">
    <property type="interactions" value="118"/>
</dbReference>
<dbReference type="MINT" id="Q70UQ0"/>
<dbReference type="GlyConnect" id="1398">
    <property type="glycosylation" value="2 N-Linked glycans (2 sites)"/>
</dbReference>
<dbReference type="GlyCosmos" id="Q70UQ0">
    <property type="glycosylation" value="2 sites, 3 glycans"/>
</dbReference>
<dbReference type="GlyGen" id="Q70UQ0">
    <property type="glycosylation" value="4 sites, 30 N-linked glycans (2 sites), 1 O-linked glycan (1 site)"/>
</dbReference>
<dbReference type="iPTMnet" id="Q70UQ0"/>
<dbReference type="PhosphoSitePlus" id="Q70UQ0"/>
<dbReference type="SwissPalm" id="Q70UQ0"/>
<dbReference type="BioMuta" id="IKBIP"/>
<dbReference type="DMDM" id="74712656"/>
<dbReference type="jPOST" id="Q70UQ0"/>
<dbReference type="MassIVE" id="Q70UQ0"/>
<dbReference type="PeptideAtlas" id="Q70UQ0"/>
<dbReference type="ProteomicsDB" id="68566">
    <molecule id="Q70UQ0-1"/>
</dbReference>
<dbReference type="ProteomicsDB" id="68567">
    <molecule id="Q70UQ0-2"/>
</dbReference>
<dbReference type="ProteomicsDB" id="68568">
    <molecule id="Q70UQ0-3"/>
</dbReference>
<dbReference type="ProteomicsDB" id="68569">
    <molecule id="Q70UQ0-4"/>
</dbReference>
<dbReference type="Pumba" id="Q70UQ0"/>
<dbReference type="Antibodypedia" id="44824">
    <property type="antibodies" value="200 antibodies from 25 providers"/>
</dbReference>
<dbReference type="CPTC" id="Q70UQ0">
    <property type="antibodies" value="1 antibody"/>
</dbReference>
<dbReference type="DNASU" id="121457"/>
<dbReference type="Ensembl" id="ENST00000299157.5">
    <molecule id="Q70UQ0-4"/>
    <property type="protein sequence ID" value="ENSP00000299157.4"/>
    <property type="gene ID" value="ENSG00000166130.15"/>
</dbReference>
<dbReference type="Ensembl" id="ENST00000342502.6">
    <molecule id="Q70UQ0-1"/>
    <property type="protein sequence ID" value="ENSP00000343471.2"/>
    <property type="gene ID" value="ENSG00000166130.15"/>
</dbReference>
<dbReference type="Ensembl" id="ENST00000393042.3">
    <molecule id="Q70UQ0-3"/>
    <property type="protein sequence ID" value="ENSP00000376762.3"/>
    <property type="gene ID" value="ENSG00000166130.15"/>
</dbReference>
<dbReference type="GeneID" id="121457"/>
<dbReference type="KEGG" id="hsa:121457"/>
<dbReference type="MANE-Select" id="ENST00000299157.5">
    <molecule id="Q70UQ0-4"/>
    <property type="protein sequence ID" value="ENSP00000299157.4"/>
    <property type="RefSeq nucleotide sequence ID" value="NM_153687.4"/>
    <property type="RefSeq protein sequence ID" value="NP_710154.1"/>
</dbReference>
<dbReference type="UCSC" id="uc001tfv.5">
    <molecule id="Q70UQ0-1"/>
    <property type="organism name" value="human"/>
</dbReference>
<dbReference type="AGR" id="HGNC:26430"/>
<dbReference type="CTD" id="121457"/>
<dbReference type="DisGeNET" id="121457"/>
<dbReference type="GeneCards" id="IKBIP"/>
<dbReference type="HGNC" id="HGNC:26430">
    <property type="gene designation" value="IKBIP"/>
</dbReference>
<dbReference type="HPA" id="ENSG00000166130">
    <property type="expression patterns" value="Low tissue specificity"/>
</dbReference>
<dbReference type="MIM" id="609861">
    <property type="type" value="gene"/>
</dbReference>
<dbReference type="neXtProt" id="NX_Q70UQ0"/>
<dbReference type="OpenTargets" id="ENSG00000166130"/>
<dbReference type="PharmGKB" id="PA165512948"/>
<dbReference type="VEuPathDB" id="HostDB:ENSG00000166130"/>
<dbReference type="GeneTree" id="ENSGT00500000045001"/>
<dbReference type="HOGENOM" id="CLU_2757083_0_0_1"/>
<dbReference type="InParanoid" id="Q70UQ0"/>
<dbReference type="OMA" id="LTLQMFN"/>
<dbReference type="OrthoDB" id="9907187at2759"/>
<dbReference type="PAN-GO" id="Q70UQ0">
    <property type="GO annotations" value="0 GO annotations based on evolutionary models"/>
</dbReference>
<dbReference type="PhylomeDB" id="Q70UQ0"/>
<dbReference type="TreeFam" id="TF331715"/>
<dbReference type="PathwayCommons" id="Q70UQ0"/>
<dbReference type="Reactome" id="R-HSA-9758274">
    <property type="pathway name" value="Regulation of NF-kappa B signaling"/>
</dbReference>
<dbReference type="SignaLink" id="Q70UQ0"/>
<dbReference type="BioGRID-ORCS" id="121457">
    <property type="hits" value="7 hits in 1147 CRISPR screens"/>
</dbReference>
<dbReference type="ChiTaRS" id="IKBIP">
    <property type="organism name" value="human"/>
</dbReference>
<dbReference type="GenomeRNAi" id="121457"/>
<dbReference type="Pharos" id="Q70UQ0">
    <property type="development level" value="Tbio"/>
</dbReference>
<dbReference type="PRO" id="PR:Q70UQ0"/>
<dbReference type="Proteomes" id="UP000005640">
    <property type="component" value="Chromosome 12"/>
</dbReference>
<dbReference type="RNAct" id="Q70UQ0">
    <property type="molecule type" value="protein"/>
</dbReference>
<dbReference type="Bgee" id="ENSG00000166130">
    <property type="expression patterns" value="Expressed in stromal cell of endometrium and 160 other cell types or tissues"/>
</dbReference>
<dbReference type="GO" id="GO:0005783">
    <property type="term" value="C:endoplasmic reticulum"/>
    <property type="evidence" value="ECO:0000314"/>
    <property type="project" value="HGNC-UCL"/>
</dbReference>
<dbReference type="GO" id="GO:0005789">
    <property type="term" value="C:endoplasmic reticulum membrane"/>
    <property type="evidence" value="ECO:0000304"/>
    <property type="project" value="Reactome"/>
</dbReference>
<dbReference type="GO" id="GO:0016020">
    <property type="term" value="C:membrane"/>
    <property type="evidence" value="ECO:0007005"/>
    <property type="project" value="UniProtKB"/>
</dbReference>
<dbReference type="GO" id="GO:0005730">
    <property type="term" value="C:nucleolus"/>
    <property type="evidence" value="ECO:0000314"/>
    <property type="project" value="HPA"/>
</dbReference>
<dbReference type="GO" id="GO:0010165">
    <property type="term" value="P:response to X-ray"/>
    <property type="evidence" value="ECO:0000304"/>
    <property type="project" value="BHF-UCL"/>
</dbReference>
<dbReference type="Gene3D" id="1.10.287.1490">
    <property type="match status" value="1"/>
</dbReference>
<dbReference type="InterPro" id="IPR024152">
    <property type="entry name" value="Inh_kappa-B_kinase-int"/>
</dbReference>
<dbReference type="PANTHER" id="PTHR21734">
    <property type="entry name" value="INHIBITOR OF NUCLEAR FACTOR KAPPA-B KINASE-INTERACTING PROTEIN"/>
    <property type="match status" value="1"/>
</dbReference>
<dbReference type="PANTHER" id="PTHR21734:SF10">
    <property type="entry name" value="INHIBITOR OF NUCLEAR FACTOR KAPPA-B KINASE-INTERACTING PROTEIN"/>
    <property type="match status" value="1"/>
</dbReference>
<organism>
    <name type="scientific">Homo sapiens</name>
    <name type="common">Human</name>
    <dbReference type="NCBI Taxonomy" id="9606"/>
    <lineage>
        <taxon>Eukaryota</taxon>
        <taxon>Metazoa</taxon>
        <taxon>Chordata</taxon>
        <taxon>Craniata</taxon>
        <taxon>Vertebrata</taxon>
        <taxon>Euteleostomi</taxon>
        <taxon>Mammalia</taxon>
        <taxon>Eutheria</taxon>
        <taxon>Euarchontoglires</taxon>
        <taxon>Primates</taxon>
        <taxon>Haplorrhini</taxon>
        <taxon>Catarrhini</taxon>
        <taxon>Hominidae</taxon>
        <taxon>Homo</taxon>
    </lineage>
</organism>